<gene>
    <name evidence="1" type="primary">tsf</name>
    <name type="ordered locus">CJJ81176_1196</name>
</gene>
<protein>
    <recommendedName>
        <fullName evidence="1">Elongation factor Ts</fullName>
        <shortName evidence="1">EF-Ts</shortName>
    </recommendedName>
</protein>
<evidence type="ECO:0000255" key="1">
    <source>
        <dbReference type="HAMAP-Rule" id="MF_00050"/>
    </source>
</evidence>
<reference key="1">
    <citation type="submission" date="2006-12" db="EMBL/GenBank/DDBJ databases">
        <authorList>
            <person name="Fouts D.E."/>
            <person name="Nelson K.E."/>
            <person name="Sebastian Y."/>
        </authorList>
    </citation>
    <scope>NUCLEOTIDE SEQUENCE [LARGE SCALE GENOMIC DNA]</scope>
    <source>
        <strain>81-176</strain>
    </source>
</reference>
<proteinExistence type="inferred from homology"/>
<name>EFTS_CAMJJ</name>
<sequence length="357" mass="39537">MAEITAAMVKELRESTGAGMMDCKNALSETNGDFDKAVQLLREKGLGKAAKKADRLAAEGLVSVKVSDDFTSATVSEINSETDFVAKNDQFIALTKDTTAHIQSNSLQSVEELHSSTINGVKFEEYLKSQIATIGENLVVRRFATLKAGANGVVNGYIHTNGRVGVVIAAACDSTEVASKSRDLLRQICMHIAAMRPSYLSYEDLDMTFVENEYKALVAELEKENEERRRLKDPNKPEHKIPQFASRKQLSDAILKEAEEKIKEELKAQGKPEKIWDNIIPGKINSFIADNSQLDSKLTLMGQFYVMDDKKTVEQVIAEKEKEFGGKIKIVEFICFEVGEGLEKKTEDFAAEVAAQL</sequence>
<accession>A1W0G5</accession>
<feature type="chain" id="PRO_1000006072" description="Elongation factor Ts">
    <location>
        <begin position="1"/>
        <end position="357"/>
    </location>
</feature>
<feature type="region of interest" description="Involved in Mg(2+) ion dislocation from EF-Tu" evidence="1">
    <location>
        <begin position="82"/>
        <end position="85"/>
    </location>
</feature>
<dbReference type="EMBL" id="CP000538">
    <property type="protein sequence ID" value="EAQ72188.1"/>
    <property type="molecule type" value="Genomic_DNA"/>
</dbReference>
<dbReference type="RefSeq" id="WP_002856144.1">
    <property type="nucleotide sequence ID" value="NC_008787.1"/>
</dbReference>
<dbReference type="SMR" id="A1W0G5"/>
<dbReference type="KEGG" id="cjj:CJJ81176_1196"/>
<dbReference type="eggNOG" id="COG0264">
    <property type="taxonomic scope" value="Bacteria"/>
</dbReference>
<dbReference type="HOGENOM" id="CLU_047155_0_1_7"/>
<dbReference type="Proteomes" id="UP000000646">
    <property type="component" value="Chromosome"/>
</dbReference>
<dbReference type="GO" id="GO:0005737">
    <property type="term" value="C:cytoplasm"/>
    <property type="evidence" value="ECO:0007669"/>
    <property type="project" value="UniProtKB-SubCell"/>
</dbReference>
<dbReference type="GO" id="GO:0003746">
    <property type="term" value="F:translation elongation factor activity"/>
    <property type="evidence" value="ECO:0007669"/>
    <property type="project" value="UniProtKB-UniRule"/>
</dbReference>
<dbReference type="CDD" id="cd14275">
    <property type="entry name" value="UBA_EF-Ts"/>
    <property type="match status" value="1"/>
</dbReference>
<dbReference type="FunFam" id="1.10.8.10:FF:000001">
    <property type="entry name" value="Elongation factor Ts"/>
    <property type="match status" value="1"/>
</dbReference>
<dbReference type="Gene3D" id="1.10.286.20">
    <property type="match status" value="2"/>
</dbReference>
<dbReference type="Gene3D" id="1.10.8.10">
    <property type="entry name" value="DNA helicase RuvA subunit, C-terminal domain"/>
    <property type="match status" value="1"/>
</dbReference>
<dbReference type="Gene3D" id="3.30.479.20">
    <property type="entry name" value="Elongation factor Ts, dimerisation domain"/>
    <property type="match status" value="3"/>
</dbReference>
<dbReference type="HAMAP" id="MF_00050">
    <property type="entry name" value="EF_Ts"/>
    <property type="match status" value="1"/>
</dbReference>
<dbReference type="InterPro" id="IPR036402">
    <property type="entry name" value="EF-Ts_dimer_sf"/>
</dbReference>
<dbReference type="InterPro" id="IPR001816">
    <property type="entry name" value="Transl_elong_EFTs/EF1B"/>
</dbReference>
<dbReference type="InterPro" id="IPR014039">
    <property type="entry name" value="Transl_elong_EFTs/EF1B_dimer"/>
</dbReference>
<dbReference type="InterPro" id="IPR018101">
    <property type="entry name" value="Transl_elong_Ts_CS"/>
</dbReference>
<dbReference type="InterPro" id="IPR009060">
    <property type="entry name" value="UBA-like_sf"/>
</dbReference>
<dbReference type="NCBIfam" id="TIGR00116">
    <property type="entry name" value="tsf"/>
    <property type="match status" value="1"/>
</dbReference>
<dbReference type="PANTHER" id="PTHR11741">
    <property type="entry name" value="ELONGATION FACTOR TS"/>
    <property type="match status" value="1"/>
</dbReference>
<dbReference type="PANTHER" id="PTHR11741:SF0">
    <property type="entry name" value="ELONGATION FACTOR TS, MITOCHONDRIAL"/>
    <property type="match status" value="1"/>
</dbReference>
<dbReference type="Pfam" id="PF00889">
    <property type="entry name" value="EF_TS"/>
    <property type="match status" value="2"/>
</dbReference>
<dbReference type="SUPFAM" id="SSF54713">
    <property type="entry name" value="Elongation factor Ts (EF-Ts), dimerisation domain"/>
    <property type="match status" value="3"/>
</dbReference>
<dbReference type="SUPFAM" id="SSF46934">
    <property type="entry name" value="UBA-like"/>
    <property type="match status" value="1"/>
</dbReference>
<dbReference type="PROSITE" id="PS01126">
    <property type="entry name" value="EF_TS_1"/>
    <property type="match status" value="1"/>
</dbReference>
<dbReference type="PROSITE" id="PS01127">
    <property type="entry name" value="EF_TS_2"/>
    <property type="match status" value="1"/>
</dbReference>
<comment type="function">
    <text evidence="1">Associates with the EF-Tu.GDP complex and induces the exchange of GDP to GTP. It remains bound to the aminoacyl-tRNA.EF-Tu.GTP complex up to the GTP hydrolysis stage on the ribosome.</text>
</comment>
<comment type="subcellular location">
    <subcellularLocation>
        <location evidence="1">Cytoplasm</location>
    </subcellularLocation>
</comment>
<comment type="similarity">
    <text evidence="1">Belongs to the EF-Ts family.</text>
</comment>
<keyword id="KW-0963">Cytoplasm</keyword>
<keyword id="KW-0251">Elongation factor</keyword>
<keyword id="KW-0648">Protein biosynthesis</keyword>
<organism>
    <name type="scientific">Campylobacter jejuni subsp. jejuni serotype O:23/36 (strain 81-176)</name>
    <dbReference type="NCBI Taxonomy" id="354242"/>
    <lineage>
        <taxon>Bacteria</taxon>
        <taxon>Pseudomonadati</taxon>
        <taxon>Campylobacterota</taxon>
        <taxon>Epsilonproteobacteria</taxon>
        <taxon>Campylobacterales</taxon>
        <taxon>Campylobacteraceae</taxon>
        <taxon>Campylobacter</taxon>
    </lineage>
</organism>